<gene>
    <name evidence="1" type="primary">era</name>
    <name type="ordered locus">SPN23F08940</name>
</gene>
<organism>
    <name type="scientific">Streptococcus pneumoniae (strain ATCC 700669 / Spain 23F-1)</name>
    <dbReference type="NCBI Taxonomy" id="561276"/>
    <lineage>
        <taxon>Bacteria</taxon>
        <taxon>Bacillati</taxon>
        <taxon>Bacillota</taxon>
        <taxon>Bacilli</taxon>
        <taxon>Lactobacillales</taxon>
        <taxon>Streptococcaceae</taxon>
        <taxon>Streptococcus</taxon>
    </lineage>
</organism>
<dbReference type="EMBL" id="FM211187">
    <property type="protein sequence ID" value="CAR68720.1"/>
    <property type="molecule type" value="Genomic_DNA"/>
</dbReference>
<dbReference type="RefSeq" id="WP_000143264.1">
    <property type="nucleotide sequence ID" value="NC_011900.1"/>
</dbReference>
<dbReference type="SMR" id="B8ZP66"/>
<dbReference type="GeneID" id="93739768"/>
<dbReference type="KEGG" id="sne:SPN23F08940"/>
<dbReference type="HOGENOM" id="CLU_038009_1_0_9"/>
<dbReference type="GO" id="GO:0005829">
    <property type="term" value="C:cytosol"/>
    <property type="evidence" value="ECO:0007669"/>
    <property type="project" value="TreeGrafter"/>
</dbReference>
<dbReference type="GO" id="GO:0005886">
    <property type="term" value="C:plasma membrane"/>
    <property type="evidence" value="ECO:0007669"/>
    <property type="project" value="UniProtKB-SubCell"/>
</dbReference>
<dbReference type="GO" id="GO:0005525">
    <property type="term" value="F:GTP binding"/>
    <property type="evidence" value="ECO:0007669"/>
    <property type="project" value="UniProtKB-UniRule"/>
</dbReference>
<dbReference type="GO" id="GO:0003924">
    <property type="term" value="F:GTPase activity"/>
    <property type="evidence" value="ECO:0007669"/>
    <property type="project" value="UniProtKB-UniRule"/>
</dbReference>
<dbReference type="GO" id="GO:0043024">
    <property type="term" value="F:ribosomal small subunit binding"/>
    <property type="evidence" value="ECO:0007669"/>
    <property type="project" value="TreeGrafter"/>
</dbReference>
<dbReference type="GO" id="GO:0070181">
    <property type="term" value="F:small ribosomal subunit rRNA binding"/>
    <property type="evidence" value="ECO:0007669"/>
    <property type="project" value="UniProtKB-UniRule"/>
</dbReference>
<dbReference type="GO" id="GO:0000028">
    <property type="term" value="P:ribosomal small subunit assembly"/>
    <property type="evidence" value="ECO:0007669"/>
    <property type="project" value="TreeGrafter"/>
</dbReference>
<dbReference type="CDD" id="cd04163">
    <property type="entry name" value="Era"/>
    <property type="match status" value="1"/>
</dbReference>
<dbReference type="CDD" id="cd22534">
    <property type="entry name" value="KH-II_Era"/>
    <property type="match status" value="1"/>
</dbReference>
<dbReference type="FunFam" id="3.30.300.20:FF:000003">
    <property type="entry name" value="GTPase Era"/>
    <property type="match status" value="1"/>
</dbReference>
<dbReference type="FunFam" id="3.40.50.300:FF:000094">
    <property type="entry name" value="GTPase Era"/>
    <property type="match status" value="1"/>
</dbReference>
<dbReference type="Gene3D" id="3.30.300.20">
    <property type="match status" value="1"/>
</dbReference>
<dbReference type="Gene3D" id="3.40.50.300">
    <property type="entry name" value="P-loop containing nucleotide triphosphate hydrolases"/>
    <property type="match status" value="1"/>
</dbReference>
<dbReference type="HAMAP" id="MF_00367">
    <property type="entry name" value="GTPase_Era"/>
    <property type="match status" value="1"/>
</dbReference>
<dbReference type="InterPro" id="IPR030388">
    <property type="entry name" value="G_ERA_dom"/>
</dbReference>
<dbReference type="InterPro" id="IPR006073">
    <property type="entry name" value="GTP-bd"/>
</dbReference>
<dbReference type="InterPro" id="IPR005662">
    <property type="entry name" value="GTPase_Era-like"/>
</dbReference>
<dbReference type="InterPro" id="IPR015946">
    <property type="entry name" value="KH_dom-like_a/b"/>
</dbReference>
<dbReference type="InterPro" id="IPR004044">
    <property type="entry name" value="KH_dom_type_2"/>
</dbReference>
<dbReference type="InterPro" id="IPR009019">
    <property type="entry name" value="KH_sf_prok-type"/>
</dbReference>
<dbReference type="InterPro" id="IPR027417">
    <property type="entry name" value="P-loop_NTPase"/>
</dbReference>
<dbReference type="InterPro" id="IPR005225">
    <property type="entry name" value="Small_GTP-bd"/>
</dbReference>
<dbReference type="NCBIfam" id="TIGR00436">
    <property type="entry name" value="era"/>
    <property type="match status" value="1"/>
</dbReference>
<dbReference type="NCBIfam" id="NF000908">
    <property type="entry name" value="PRK00089.1"/>
    <property type="match status" value="1"/>
</dbReference>
<dbReference type="NCBIfam" id="TIGR00231">
    <property type="entry name" value="small_GTP"/>
    <property type="match status" value="1"/>
</dbReference>
<dbReference type="PANTHER" id="PTHR42698">
    <property type="entry name" value="GTPASE ERA"/>
    <property type="match status" value="1"/>
</dbReference>
<dbReference type="PANTHER" id="PTHR42698:SF1">
    <property type="entry name" value="GTPASE ERA, MITOCHONDRIAL"/>
    <property type="match status" value="1"/>
</dbReference>
<dbReference type="Pfam" id="PF07650">
    <property type="entry name" value="KH_2"/>
    <property type="match status" value="1"/>
</dbReference>
<dbReference type="Pfam" id="PF01926">
    <property type="entry name" value="MMR_HSR1"/>
    <property type="match status" value="1"/>
</dbReference>
<dbReference type="SUPFAM" id="SSF52540">
    <property type="entry name" value="P-loop containing nucleoside triphosphate hydrolases"/>
    <property type="match status" value="1"/>
</dbReference>
<dbReference type="SUPFAM" id="SSF54814">
    <property type="entry name" value="Prokaryotic type KH domain (KH-domain type II)"/>
    <property type="match status" value="1"/>
</dbReference>
<dbReference type="PROSITE" id="PS51713">
    <property type="entry name" value="G_ERA"/>
    <property type="match status" value="1"/>
</dbReference>
<dbReference type="PROSITE" id="PS50823">
    <property type="entry name" value="KH_TYPE_2"/>
    <property type="match status" value="1"/>
</dbReference>
<evidence type="ECO:0000255" key="1">
    <source>
        <dbReference type="HAMAP-Rule" id="MF_00367"/>
    </source>
</evidence>
<evidence type="ECO:0000255" key="2">
    <source>
        <dbReference type="PROSITE-ProRule" id="PRU01050"/>
    </source>
</evidence>
<name>ERA_STRPJ</name>
<reference key="1">
    <citation type="journal article" date="2009" name="J. Bacteriol.">
        <title>Role of conjugative elements in the evolution of the multidrug-resistant pandemic clone Streptococcus pneumoniae Spain23F ST81.</title>
        <authorList>
            <person name="Croucher N.J."/>
            <person name="Walker D."/>
            <person name="Romero P."/>
            <person name="Lennard N."/>
            <person name="Paterson G.K."/>
            <person name="Bason N.C."/>
            <person name="Mitchell A.M."/>
            <person name="Quail M.A."/>
            <person name="Andrew P.W."/>
            <person name="Parkhill J."/>
            <person name="Bentley S.D."/>
            <person name="Mitchell T.J."/>
        </authorList>
    </citation>
    <scope>NUCLEOTIDE SEQUENCE [LARGE SCALE GENOMIC DNA]</scope>
    <source>
        <strain>ATCC 700669 / Spain 23F-1</strain>
    </source>
</reference>
<proteinExistence type="inferred from homology"/>
<feature type="chain" id="PRO_1000189973" description="GTPase Era">
    <location>
        <begin position="1"/>
        <end position="299"/>
    </location>
</feature>
<feature type="domain" description="Era-type G" evidence="2">
    <location>
        <begin position="4"/>
        <end position="171"/>
    </location>
</feature>
<feature type="domain" description="KH type-2" evidence="1">
    <location>
        <begin position="202"/>
        <end position="280"/>
    </location>
</feature>
<feature type="region of interest" description="G1" evidence="2">
    <location>
        <begin position="12"/>
        <end position="19"/>
    </location>
</feature>
<feature type="region of interest" description="G2" evidence="2">
    <location>
        <begin position="38"/>
        <end position="42"/>
    </location>
</feature>
<feature type="region of interest" description="G3" evidence="2">
    <location>
        <begin position="59"/>
        <end position="62"/>
    </location>
</feature>
<feature type="region of interest" description="G4" evidence="2">
    <location>
        <begin position="121"/>
        <end position="124"/>
    </location>
</feature>
<feature type="region of interest" description="G5" evidence="2">
    <location>
        <begin position="150"/>
        <end position="152"/>
    </location>
</feature>
<feature type="binding site" evidence="1">
    <location>
        <begin position="12"/>
        <end position="19"/>
    </location>
    <ligand>
        <name>GTP</name>
        <dbReference type="ChEBI" id="CHEBI:37565"/>
    </ligand>
</feature>
<feature type="binding site" evidence="1">
    <location>
        <begin position="59"/>
        <end position="63"/>
    </location>
    <ligand>
        <name>GTP</name>
        <dbReference type="ChEBI" id="CHEBI:37565"/>
    </ligand>
</feature>
<feature type="binding site" evidence="1">
    <location>
        <begin position="121"/>
        <end position="124"/>
    </location>
    <ligand>
        <name>GTP</name>
        <dbReference type="ChEBI" id="CHEBI:37565"/>
    </ligand>
</feature>
<comment type="function">
    <text evidence="1">An essential GTPase that binds both GDP and GTP, with rapid nucleotide exchange. Plays a role in 16S rRNA processing and 30S ribosomal subunit biogenesis and possibly also in cell cycle regulation and energy metabolism.</text>
</comment>
<comment type="subunit">
    <text evidence="1">Monomer.</text>
</comment>
<comment type="subcellular location">
    <subcellularLocation>
        <location>Cytoplasm</location>
    </subcellularLocation>
    <subcellularLocation>
        <location evidence="1">Cell membrane</location>
        <topology evidence="1">Peripheral membrane protein</topology>
    </subcellularLocation>
</comment>
<comment type="similarity">
    <text evidence="1 2">Belongs to the TRAFAC class TrmE-Era-EngA-EngB-Septin-like GTPase superfamily. Era GTPase family.</text>
</comment>
<keyword id="KW-1003">Cell membrane</keyword>
<keyword id="KW-0963">Cytoplasm</keyword>
<keyword id="KW-0342">GTP-binding</keyword>
<keyword id="KW-0472">Membrane</keyword>
<keyword id="KW-0547">Nucleotide-binding</keyword>
<keyword id="KW-0690">Ribosome biogenesis</keyword>
<keyword id="KW-0694">RNA-binding</keyword>
<keyword id="KW-0699">rRNA-binding</keyword>
<protein>
    <recommendedName>
        <fullName evidence="1">GTPase Era</fullName>
    </recommendedName>
</protein>
<sequence>MTFKSGFVAILGRPNVGKSTFLNHVMGQKIAIMSDKAQTTRNKIMGIYTTDKEQIVFIDTPGIHKPKTALGDFMVESAYSTLREVDTVLFMVPADEARGKGDDMIIERLKAAKVPVILVVNKIDKVHPDQLLSQIDDFRNQMDFKEIVPISALQGNNVSRLVDILSENLDEGFQYFPSDQITDHPERFLVSEMVREKVLHLTREEIPHSVAVVVDSMKRDEETDKVHIRATIMVERDSQKGIIIGKGGAMLKKIGSMARRDIELMLGDKVFLETWVKVKKNWRDKKLDLADFGYNEKEY</sequence>
<accession>B8ZP66</accession>